<dbReference type="EMBL" id="AP009484">
    <property type="protein sequence ID" value="BAH18621.1"/>
    <property type="molecule type" value="Genomic_DNA"/>
</dbReference>
<dbReference type="RefSeq" id="WP_015912413.1">
    <property type="nucleotide sequence ID" value="NC_011999.1"/>
</dbReference>
<dbReference type="SMR" id="B9E8V3"/>
<dbReference type="STRING" id="458233.MCCL_1914"/>
<dbReference type="KEGG" id="mcl:MCCL_1914"/>
<dbReference type="eggNOG" id="COG2088">
    <property type="taxonomic scope" value="Bacteria"/>
</dbReference>
<dbReference type="HOGENOM" id="CLU_103669_2_1_9"/>
<dbReference type="OrthoDB" id="9796286at2"/>
<dbReference type="Proteomes" id="UP000001383">
    <property type="component" value="Chromosome"/>
</dbReference>
<dbReference type="GO" id="GO:0000917">
    <property type="term" value="P:division septum assembly"/>
    <property type="evidence" value="ECO:0007669"/>
    <property type="project" value="UniProtKB-KW"/>
</dbReference>
<dbReference type="GO" id="GO:0030435">
    <property type="term" value="P:sporulation resulting in formation of a cellular spore"/>
    <property type="evidence" value="ECO:0007669"/>
    <property type="project" value="InterPro"/>
</dbReference>
<dbReference type="Gene3D" id="3.30.1120.40">
    <property type="entry name" value="Stage V sporulation protein G"/>
    <property type="match status" value="1"/>
</dbReference>
<dbReference type="HAMAP" id="MF_00819">
    <property type="entry name" value="SpoVG"/>
    <property type="match status" value="1"/>
</dbReference>
<dbReference type="InterPro" id="IPR007170">
    <property type="entry name" value="SpoVG"/>
</dbReference>
<dbReference type="InterPro" id="IPR036751">
    <property type="entry name" value="SpoVG_sf"/>
</dbReference>
<dbReference type="NCBIfam" id="NF009749">
    <property type="entry name" value="PRK13259.1"/>
    <property type="match status" value="1"/>
</dbReference>
<dbReference type="PANTHER" id="PTHR38429">
    <property type="entry name" value="SEPTATION PROTEIN SPOVG-RELATED"/>
    <property type="match status" value="1"/>
</dbReference>
<dbReference type="PANTHER" id="PTHR38429:SF1">
    <property type="entry name" value="SEPTATION PROTEIN SPOVG-RELATED"/>
    <property type="match status" value="1"/>
</dbReference>
<dbReference type="Pfam" id="PF04026">
    <property type="entry name" value="SpoVG"/>
    <property type="match status" value="1"/>
</dbReference>
<dbReference type="SUPFAM" id="SSF160537">
    <property type="entry name" value="SpoVG-like"/>
    <property type="match status" value="1"/>
</dbReference>
<evidence type="ECO:0000255" key="1">
    <source>
        <dbReference type="HAMAP-Rule" id="MF_00819"/>
    </source>
</evidence>
<evidence type="ECO:0000256" key="2">
    <source>
        <dbReference type="SAM" id="MobiDB-lite"/>
    </source>
</evidence>
<name>SP5G_MACCJ</name>
<proteinExistence type="inferred from homology"/>
<reference key="1">
    <citation type="journal article" date="2009" name="J. Bacteriol.">
        <title>Complete genome sequence of Macrococcus caseolyticus strain JCSCS5402, reflecting the ancestral genome of the human-pathogenic staphylococci.</title>
        <authorList>
            <person name="Baba T."/>
            <person name="Kuwahara-Arai K."/>
            <person name="Uchiyama I."/>
            <person name="Takeuchi F."/>
            <person name="Ito T."/>
            <person name="Hiramatsu K."/>
        </authorList>
    </citation>
    <scope>NUCLEOTIDE SEQUENCE [LARGE SCALE GENOMIC DNA]</scope>
    <source>
        <strain>JCSC5402</strain>
    </source>
</reference>
<feature type="chain" id="PRO_1000148686" description="Putative septation protein SpoVG">
    <location>
        <begin position="1"/>
        <end position="115"/>
    </location>
</feature>
<feature type="region of interest" description="Disordered" evidence="2">
    <location>
        <begin position="88"/>
        <end position="115"/>
    </location>
</feature>
<feature type="compositionally biased region" description="Polar residues" evidence="2">
    <location>
        <begin position="91"/>
        <end position="100"/>
    </location>
</feature>
<feature type="compositionally biased region" description="Basic and acidic residues" evidence="2">
    <location>
        <begin position="105"/>
        <end position="115"/>
    </location>
</feature>
<organism>
    <name type="scientific">Macrococcus caseolyticus (strain JCSC5402)</name>
    <name type="common">Macrococcoides caseolyticum</name>
    <dbReference type="NCBI Taxonomy" id="458233"/>
    <lineage>
        <taxon>Bacteria</taxon>
        <taxon>Bacillati</taxon>
        <taxon>Bacillota</taxon>
        <taxon>Bacilli</taxon>
        <taxon>Bacillales</taxon>
        <taxon>Staphylococcaceae</taxon>
        <taxon>Macrococcoides</taxon>
    </lineage>
</organism>
<gene>
    <name evidence="1" type="primary">spoVG</name>
    <name type="ordered locus">MCCL_1914</name>
</gene>
<protein>
    <recommendedName>
        <fullName evidence="1">Putative septation protein SpoVG</fullName>
    </recommendedName>
</protein>
<accession>B9E8V3</accession>
<sequence length="115" mass="12831">MKVTDVRMRKLVTDSRMKALASITLDEAFVIHDLRVIDGNNGLFVAMPSKRTSDGEFRDIAHPINSEMRQEIQEAVMKVYDETEAVEPGTIATSEVSSQLEESDSDKTLSEDLKA</sequence>
<comment type="function">
    <text evidence="1">Could be involved in septation.</text>
</comment>
<comment type="similarity">
    <text evidence="1">Belongs to the SpoVG family.</text>
</comment>
<keyword id="KW-0131">Cell cycle</keyword>
<keyword id="KW-0132">Cell division</keyword>
<keyword id="KW-1185">Reference proteome</keyword>
<keyword id="KW-0717">Septation</keyword>